<feature type="chain" id="PRO_0000425376" description="Protein trichome birefringence-like 10">
    <location>
        <begin position="1"/>
        <end position="469"/>
    </location>
</feature>
<feature type="transmembrane region" description="Helical; Signal-anchor for type II membrane protein" evidence="3">
    <location>
        <begin position="33"/>
        <end position="53"/>
    </location>
</feature>
<feature type="short sequence motif" description="GDS motif">
    <location>
        <begin position="176"/>
        <end position="178"/>
    </location>
</feature>
<feature type="short sequence motif" description="DCXHWCLPGXXDXWN motif">
    <location>
        <begin position="424"/>
        <end position="438"/>
    </location>
</feature>
<feature type="splice variant" id="VSP_053687" description="In isoform 2." evidence="4">
    <original>GGDWKT</original>
    <variation>FVRYYS</variation>
    <location>
        <begin position="341"/>
        <end position="346"/>
    </location>
</feature>
<feature type="splice variant" id="VSP_053688" description="In isoform 2." evidence="4">
    <location>
        <begin position="347"/>
        <end position="469"/>
    </location>
</feature>
<keyword id="KW-0025">Alternative splicing</keyword>
<keyword id="KW-0472">Membrane</keyword>
<keyword id="KW-1185">Reference proteome</keyword>
<keyword id="KW-0735">Signal-anchor</keyword>
<keyword id="KW-0812">Transmembrane</keyword>
<keyword id="KW-1133">Transmembrane helix</keyword>
<protein>
    <recommendedName>
        <fullName>Protein trichome birefringence-like 10</fullName>
    </recommendedName>
</protein>
<name>TBL10_ARATH</name>
<proteinExistence type="evidence at transcript level"/>
<gene>
    <name type="primary">TBL10</name>
    <name type="ordered locus">At3g06080</name>
    <name type="ORF">F24F17.6</name>
    <name type="ORF">F28L1.1</name>
</gene>
<comment type="function">
    <text evidence="1 2">May act as a bridging protein that binds pectin and other cell wall polysaccharides. Probably involved in maintaining esterification of pectins (By similarity). May be involved in the specific O-acetylation of cell wall polymers (By similarity).</text>
</comment>
<comment type="subcellular location">
    <subcellularLocation>
        <location evidence="5">Membrane</location>
        <topology evidence="5">Single-pass type II membrane protein</topology>
    </subcellularLocation>
</comment>
<comment type="alternative products">
    <event type="alternative splicing"/>
    <isoform>
        <id>Q9LDG2-1</id>
        <name>1</name>
        <sequence type="displayed"/>
    </isoform>
    <isoform>
        <id>Q9LDG2-2</id>
        <name>2</name>
        <sequence type="described" ref="VSP_053687 VSP_053688"/>
    </isoform>
</comment>
<comment type="miscellaneous">
    <text evidence="6">Contains 2 motifs that are conserved in esterases, but it is unlikely that this protein belongs to the catalytically active pectin esterases.</text>
</comment>
<comment type="similarity">
    <text evidence="5">Belongs to the PC-esterase family. TBL subfamily.</text>
</comment>
<accession>Q9LDG2</accession>
<accession>Q93YQ2</accession>
<reference key="1">
    <citation type="journal article" date="2000" name="Nature">
        <title>Sequence and analysis of chromosome 3 of the plant Arabidopsis thaliana.</title>
        <authorList>
            <person name="Salanoubat M."/>
            <person name="Lemcke K."/>
            <person name="Rieger M."/>
            <person name="Ansorge W."/>
            <person name="Unseld M."/>
            <person name="Fartmann B."/>
            <person name="Valle G."/>
            <person name="Bloecker H."/>
            <person name="Perez-Alonso M."/>
            <person name="Obermaier B."/>
            <person name="Delseny M."/>
            <person name="Boutry M."/>
            <person name="Grivell L.A."/>
            <person name="Mache R."/>
            <person name="Puigdomenech P."/>
            <person name="De Simone V."/>
            <person name="Choisne N."/>
            <person name="Artiguenave F."/>
            <person name="Robert C."/>
            <person name="Brottier P."/>
            <person name="Wincker P."/>
            <person name="Cattolico L."/>
            <person name="Weissenbach J."/>
            <person name="Saurin W."/>
            <person name="Quetier F."/>
            <person name="Schaefer M."/>
            <person name="Mueller-Auer S."/>
            <person name="Gabel C."/>
            <person name="Fuchs M."/>
            <person name="Benes V."/>
            <person name="Wurmbach E."/>
            <person name="Drzonek H."/>
            <person name="Erfle H."/>
            <person name="Jordan N."/>
            <person name="Bangert S."/>
            <person name="Wiedelmann R."/>
            <person name="Kranz H."/>
            <person name="Voss H."/>
            <person name="Holland R."/>
            <person name="Brandt P."/>
            <person name="Nyakatura G."/>
            <person name="Vezzi A."/>
            <person name="D'Angelo M."/>
            <person name="Pallavicini A."/>
            <person name="Toppo S."/>
            <person name="Simionati B."/>
            <person name="Conrad A."/>
            <person name="Hornischer K."/>
            <person name="Kauer G."/>
            <person name="Loehnert T.-H."/>
            <person name="Nordsiek G."/>
            <person name="Reichelt J."/>
            <person name="Scharfe M."/>
            <person name="Schoen O."/>
            <person name="Bargues M."/>
            <person name="Terol J."/>
            <person name="Climent J."/>
            <person name="Navarro P."/>
            <person name="Collado C."/>
            <person name="Perez-Perez A."/>
            <person name="Ottenwaelder B."/>
            <person name="Duchemin D."/>
            <person name="Cooke R."/>
            <person name="Laudie M."/>
            <person name="Berger-Llauro C."/>
            <person name="Purnelle B."/>
            <person name="Masuy D."/>
            <person name="de Haan M."/>
            <person name="Maarse A.C."/>
            <person name="Alcaraz J.-P."/>
            <person name="Cottet A."/>
            <person name="Casacuberta E."/>
            <person name="Monfort A."/>
            <person name="Argiriou A."/>
            <person name="Flores M."/>
            <person name="Liguori R."/>
            <person name="Vitale D."/>
            <person name="Mannhaupt G."/>
            <person name="Haase D."/>
            <person name="Schoof H."/>
            <person name="Rudd S."/>
            <person name="Zaccaria P."/>
            <person name="Mewes H.-W."/>
            <person name="Mayer K.F.X."/>
            <person name="Kaul S."/>
            <person name="Town C.D."/>
            <person name="Koo H.L."/>
            <person name="Tallon L.J."/>
            <person name="Jenkins J."/>
            <person name="Rooney T."/>
            <person name="Rizzo M."/>
            <person name="Walts A."/>
            <person name="Utterback T."/>
            <person name="Fujii C.Y."/>
            <person name="Shea T.P."/>
            <person name="Creasy T.H."/>
            <person name="Haas B."/>
            <person name="Maiti R."/>
            <person name="Wu D."/>
            <person name="Peterson J."/>
            <person name="Van Aken S."/>
            <person name="Pai G."/>
            <person name="Militscher J."/>
            <person name="Sellers P."/>
            <person name="Gill J.E."/>
            <person name="Feldblyum T.V."/>
            <person name="Preuss D."/>
            <person name="Lin X."/>
            <person name="Nierman W.C."/>
            <person name="Salzberg S.L."/>
            <person name="White O."/>
            <person name="Venter J.C."/>
            <person name="Fraser C.M."/>
            <person name="Kaneko T."/>
            <person name="Nakamura Y."/>
            <person name="Sato S."/>
            <person name="Kato T."/>
            <person name="Asamizu E."/>
            <person name="Sasamoto S."/>
            <person name="Kimura T."/>
            <person name="Idesawa K."/>
            <person name="Kawashima K."/>
            <person name="Kishida Y."/>
            <person name="Kiyokawa C."/>
            <person name="Kohara M."/>
            <person name="Matsumoto M."/>
            <person name="Matsuno A."/>
            <person name="Muraki A."/>
            <person name="Nakayama S."/>
            <person name="Nakazaki N."/>
            <person name="Shinpo S."/>
            <person name="Takeuchi C."/>
            <person name="Wada T."/>
            <person name="Watanabe A."/>
            <person name="Yamada M."/>
            <person name="Yasuda M."/>
            <person name="Tabata S."/>
        </authorList>
    </citation>
    <scope>NUCLEOTIDE SEQUENCE [LARGE SCALE GENOMIC DNA]</scope>
    <source>
        <strain>cv. Columbia</strain>
    </source>
</reference>
<reference key="2">
    <citation type="journal article" date="2017" name="Plant J.">
        <title>Araport11: a complete reannotation of the Arabidopsis thaliana reference genome.</title>
        <authorList>
            <person name="Cheng C.Y."/>
            <person name="Krishnakumar V."/>
            <person name="Chan A.P."/>
            <person name="Thibaud-Nissen F."/>
            <person name="Schobel S."/>
            <person name="Town C.D."/>
        </authorList>
    </citation>
    <scope>GENOME REANNOTATION</scope>
    <source>
        <strain>cv. Columbia</strain>
    </source>
</reference>
<reference key="3">
    <citation type="journal article" date="2003" name="Science">
        <title>Empirical analysis of transcriptional activity in the Arabidopsis genome.</title>
        <authorList>
            <person name="Yamada K."/>
            <person name="Lim J."/>
            <person name="Dale J.M."/>
            <person name="Chen H."/>
            <person name="Shinn P."/>
            <person name="Palm C.J."/>
            <person name="Southwick A.M."/>
            <person name="Wu H.C."/>
            <person name="Kim C.J."/>
            <person name="Nguyen M."/>
            <person name="Pham P.K."/>
            <person name="Cheuk R.F."/>
            <person name="Karlin-Newmann G."/>
            <person name="Liu S.X."/>
            <person name="Lam B."/>
            <person name="Sakano H."/>
            <person name="Wu T."/>
            <person name="Yu G."/>
            <person name="Miranda M."/>
            <person name="Quach H.L."/>
            <person name="Tripp M."/>
            <person name="Chang C.H."/>
            <person name="Lee J.M."/>
            <person name="Toriumi M.J."/>
            <person name="Chan M.M."/>
            <person name="Tang C.C."/>
            <person name="Onodera C.S."/>
            <person name="Deng J.M."/>
            <person name="Akiyama K."/>
            <person name="Ansari Y."/>
            <person name="Arakawa T."/>
            <person name="Banh J."/>
            <person name="Banno F."/>
            <person name="Bowser L."/>
            <person name="Brooks S.Y."/>
            <person name="Carninci P."/>
            <person name="Chao Q."/>
            <person name="Choy N."/>
            <person name="Enju A."/>
            <person name="Goldsmith A.D."/>
            <person name="Gurjal M."/>
            <person name="Hansen N.F."/>
            <person name="Hayashizaki Y."/>
            <person name="Johnson-Hopson C."/>
            <person name="Hsuan V.W."/>
            <person name="Iida K."/>
            <person name="Karnes M."/>
            <person name="Khan S."/>
            <person name="Koesema E."/>
            <person name="Ishida J."/>
            <person name="Jiang P.X."/>
            <person name="Jones T."/>
            <person name="Kawai J."/>
            <person name="Kamiya A."/>
            <person name="Meyers C."/>
            <person name="Nakajima M."/>
            <person name="Narusaka M."/>
            <person name="Seki M."/>
            <person name="Sakurai T."/>
            <person name="Satou M."/>
            <person name="Tamse R."/>
            <person name="Vaysberg M."/>
            <person name="Wallender E.K."/>
            <person name="Wong C."/>
            <person name="Yamamura Y."/>
            <person name="Yuan S."/>
            <person name="Shinozaki K."/>
            <person name="Davis R.W."/>
            <person name="Theologis A."/>
            <person name="Ecker J.R."/>
        </authorList>
    </citation>
    <scope>NUCLEOTIDE SEQUENCE [LARGE SCALE MRNA] (ISOFORM 2)</scope>
    <source>
        <strain>cv. Columbia</strain>
    </source>
</reference>
<reference key="4">
    <citation type="journal article" date="2007" name="Plant J.">
        <title>Arabidopsis ESK1 encodes a novel regulator of freezing tolerance.</title>
        <authorList>
            <person name="Xin Z."/>
            <person name="Mandaokar A."/>
            <person name="Chen J."/>
            <person name="Last R.L."/>
            <person name="Browse J."/>
        </authorList>
    </citation>
    <scope>GENE FAMILY</scope>
    <source>
        <strain>cv. Columbia</strain>
    </source>
</reference>
<reference key="5">
    <citation type="journal article" date="2010" name="Plant Physiol.">
        <title>TRICHOME BIREFRINGENCE and its homolog AT5G01360 encode plant-specific DUF231 proteins required for cellulose biosynthesis in Arabidopsis.</title>
        <authorList>
            <person name="Bischoff V."/>
            <person name="Nita S."/>
            <person name="Neumetzler L."/>
            <person name="Schindelasch D."/>
            <person name="Urbain A."/>
            <person name="Eshed R."/>
            <person name="Persson S."/>
            <person name="Delmer D."/>
            <person name="Scheible W.R."/>
        </authorList>
    </citation>
    <scope>GENE FAMILY</scope>
    <scope>NOMENCLATURE</scope>
</reference>
<reference key="6">
    <citation type="journal article" date="2010" name="Plant Signal. Behav.">
        <title>Involvement of TBL/DUF231 proteins into cell wall biology.</title>
        <authorList>
            <person name="Bischoff V."/>
            <person name="Selbig J."/>
            <person name="Scheible W.R."/>
        </authorList>
    </citation>
    <scope>3D-STRUCTURE MODELING</scope>
</reference>
<organism>
    <name type="scientific">Arabidopsis thaliana</name>
    <name type="common">Mouse-ear cress</name>
    <dbReference type="NCBI Taxonomy" id="3702"/>
    <lineage>
        <taxon>Eukaryota</taxon>
        <taxon>Viridiplantae</taxon>
        <taxon>Streptophyta</taxon>
        <taxon>Embryophyta</taxon>
        <taxon>Tracheophyta</taxon>
        <taxon>Spermatophyta</taxon>
        <taxon>Magnoliopsida</taxon>
        <taxon>eudicotyledons</taxon>
        <taxon>Gunneridae</taxon>
        <taxon>Pentapetalae</taxon>
        <taxon>rosids</taxon>
        <taxon>malvids</taxon>
        <taxon>Brassicales</taxon>
        <taxon>Brassicaceae</taxon>
        <taxon>Camelineae</taxon>
        <taxon>Arabidopsis</taxon>
    </lineage>
</organism>
<evidence type="ECO:0000250" key="1">
    <source>
        <dbReference type="UniProtKB" id="Q9FG35"/>
    </source>
</evidence>
<evidence type="ECO:0000250" key="2">
    <source>
        <dbReference type="UniProtKB" id="Q9LY46"/>
    </source>
</evidence>
<evidence type="ECO:0000255" key="3"/>
<evidence type="ECO:0000303" key="4">
    <source>
    </source>
</evidence>
<evidence type="ECO:0000305" key="5"/>
<evidence type="ECO:0000305" key="6">
    <source>
    </source>
</evidence>
<sequence length="469" mass="53649">MSKNSNVEENGGAKPICEALRRFKRSRLVFEPSLGVLGFFLVGVCLVCSFFFFDYRSVAKSYGLSDKSERFVWLKFDNISSSSSSSSNSSKRVGFLEESGSGCDVFDGDWVWDESYPLYQSKDCRFLDEGFRCSDFGRSDLFYTQWRWQPRHCNLPRFDAKLMLEKLRDKRLVFVGDSIGRNQWESLLCLLSSAVKNESLIYEINGSPITKHKGFLVFKFEEYNCTVEYYRSPFLVPQSRPPIGSPGKVKTSLKLDTMDWTSSKWRDADVLVLNTGHWWNEGKTTRTGCYFQEGEEVKLKMNVDDAYKRALNTVVKWIHTELDSNKTQVFFRTFAPVHFRGGDWKTGGTCHMETLPEIGTSLASSETWEQLKILRDVLSHNSNRSETVKVKLLNITAMAAQRKDGHPSLYYLGPHGPAPLHRQDCSHWCLPGVPDTWNELFYALFMKQEAPSSSKRVEEANSTGNVTMS</sequence>
<dbReference type="EMBL" id="AC018907">
    <property type="protein sequence ID" value="AAF30301.1"/>
    <property type="molecule type" value="Genomic_DNA"/>
</dbReference>
<dbReference type="EMBL" id="AC068073">
    <property type="protein sequence ID" value="AAF66136.1"/>
    <property type="molecule type" value="Genomic_DNA"/>
</dbReference>
<dbReference type="EMBL" id="CP002686">
    <property type="protein sequence ID" value="AEE74340.1"/>
    <property type="molecule type" value="Genomic_DNA"/>
</dbReference>
<dbReference type="EMBL" id="CP002686">
    <property type="protein sequence ID" value="AEE74341.1"/>
    <property type="molecule type" value="Genomic_DNA"/>
</dbReference>
<dbReference type="EMBL" id="AY059837">
    <property type="protein sequence ID" value="AAL24319.1"/>
    <property type="molecule type" value="mRNA"/>
</dbReference>
<dbReference type="EMBL" id="BT008735">
    <property type="protein sequence ID" value="AAP42748.1"/>
    <property type="molecule type" value="mRNA"/>
</dbReference>
<dbReference type="RefSeq" id="NP_566270.1">
    <molecule id="Q9LDG2-2"/>
    <property type="nucleotide sequence ID" value="NM_111483.3"/>
</dbReference>
<dbReference type="RefSeq" id="NP_974235.1">
    <molecule id="Q9LDG2-1"/>
    <property type="nucleotide sequence ID" value="NM_202506.2"/>
</dbReference>
<dbReference type="SMR" id="Q9LDG2"/>
<dbReference type="FunCoup" id="Q9LDG2">
    <property type="interactions" value="249"/>
</dbReference>
<dbReference type="STRING" id="3702.Q9LDG2"/>
<dbReference type="iPTMnet" id="Q9LDG2"/>
<dbReference type="PaxDb" id="3702-AT3G06080.2"/>
<dbReference type="ProteomicsDB" id="233011">
    <molecule id="Q9LDG2-1"/>
</dbReference>
<dbReference type="EnsemblPlants" id="AT3G06080.1">
    <molecule id="Q9LDG2-2"/>
    <property type="protein sequence ID" value="AT3G06080.1"/>
    <property type="gene ID" value="AT3G06080"/>
</dbReference>
<dbReference type="EnsemblPlants" id="AT3G06080.2">
    <molecule id="Q9LDG2-1"/>
    <property type="protein sequence ID" value="AT3G06080.2"/>
    <property type="gene ID" value="AT3G06080"/>
</dbReference>
<dbReference type="GeneID" id="819781"/>
<dbReference type="Gramene" id="AT3G06080.1">
    <molecule id="Q9LDG2-2"/>
    <property type="protein sequence ID" value="AT3G06080.1"/>
    <property type="gene ID" value="AT3G06080"/>
</dbReference>
<dbReference type="Gramene" id="AT3G06080.2">
    <molecule id="Q9LDG2-1"/>
    <property type="protein sequence ID" value="AT3G06080.2"/>
    <property type="gene ID" value="AT3G06080"/>
</dbReference>
<dbReference type="KEGG" id="ath:AT3G06080"/>
<dbReference type="Araport" id="AT3G06080"/>
<dbReference type="TAIR" id="AT3G06080">
    <property type="gene designation" value="TBL10"/>
</dbReference>
<dbReference type="eggNOG" id="ENOG502QPPC">
    <property type="taxonomic scope" value="Eukaryota"/>
</dbReference>
<dbReference type="InParanoid" id="Q9LDG2"/>
<dbReference type="OMA" id="WIHTEVD"/>
<dbReference type="OrthoDB" id="630188at2759"/>
<dbReference type="PhylomeDB" id="Q9LDG2"/>
<dbReference type="PRO" id="PR:Q9LDG2"/>
<dbReference type="Proteomes" id="UP000006548">
    <property type="component" value="Chromosome 3"/>
</dbReference>
<dbReference type="ExpressionAtlas" id="Q9LDG2">
    <property type="expression patterns" value="baseline and differential"/>
</dbReference>
<dbReference type="GO" id="GO:0016020">
    <property type="term" value="C:membrane"/>
    <property type="evidence" value="ECO:0007669"/>
    <property type="project" value="UniProtKB-SubCell"/>
</dbReference>
<dbReference type="GO" id="GO:0016413">
    <property type="term" value="F:O-acetyltransferase activity"/>
    <property type="evidence" value="ECO:0007669"/>
    <property type="project" value="InterPro"/>
</dbReference>
<dbReference type="GO" id="GO:0007623">
    <property type="term" value="P:circadian rhythm"/>
    <property type="evidence" value="ECO:0000270"/>
    <property type="project" value="TAIR"/>
</dbReference>
<dbReference type="InterPro" id="IPR029962">
    <property type="entry name" value="TBL"/>
</dbReference>
<dbReference type="InterPro" id="IPR026057">
    <property type="entry name" value="TBL_C"/>
</dbReference>
<dbReference type="InterPro" id="IPR025846">
    <property type="entry name" value="TBL_N"/>
</dbReference>
<dbReference type="PANTHER" id="PTHR32285:SF163">
    <property type="entry name" value="PROTEIN TRICHOME BIREFRINGENCE-LIKE 10"/>
    <property type="match status" value="1"/>
</dbReference>
<dbReference type="PANTHER" id="PTHR32285">
    <property type="entry name" value="PROTEIN TRICHOME BIREFRINGENCE-LIKE 9-RELATED"/>
    <property type="match status" value="1"/>
</dbReference>
<dbReference type="Pfam" id="PF13839">
    <property type="entry name" value="PC-Esterase"/>
    <property type="match status" value="1"/>
</dbReference>
<dbReference type="Pfam" id="PF14416">
    <property type="entry name" value="PMR5N"/>
    <property type="match status" value="1"/>
</dbReference>